<comment type="function">
    <text evidence="1">One of several proteins that assist in the late maturation steps of the functional core of the 30S ribosomal subunit. Helps release RbfA from mature subunits. May play a role in the assembly of ribosomal proteins into the subunit. Circularly permuted GTPase that catalyzes slow GTP hydrolysis, GTPase activity is stimulated by the 30S ribosomal subunit.</text>
</comment>
<comment type="cofactor">
    <cofactor evidence="1">
        <name>Zn(2+)</name>
        <dbReference type="ChEBI" id="CHEBI:29105"/>
    </cofactor>
    <text evidence="1">Binds 1 zinc ion per subunit.</text>
</comment>
<comment type="subunit">
    <text evidence="1">Monomer. Associates with 30S ribosomal subunit, binds 16S rRNA.</text>
</comment>
<comment type="subcellular location">
    <subcellularLocation>
        <location evidence="1">Cytoplasm</location>
    </subcellularLocation>
</comment>
<comment type="similarity">
    <text evidence="1">Belongs to the TRAFAC class YlqF/YawG GTPase family. RsgA subfamily.</text>
</comment>
<name>RSGA_CLOPE</name>
<accession>Q8XJL9</accession>
<sequence>MEGIIIKGIGGFYYIKTDEGIIECKARGKFRYNSLKPMVGDRVTIKVENGKGVIEDIHERSSELIRPTVANVTQAFVVFAIKNPDINLDLLNRFLTLCEYNDIHAVVCLNKEDLCTEEEKENLKELINDIGYEVLFINAKEGKGFDALKERLEHNITVLCGPSGAGKSTLLNSFIDREHMETGSVSEKIGRGKHTTRHSELIDVDNGYLVDTPGFTTLDVTFIDRDSLKYCFPEFNDYNNLCKFNGCNHYKEPKCAVKEAVEEGKINKLRYEFYIKTLEEIINRRGN</sequence>
<protein>
    <recommendedName>
        <fullName evidence="1">Small ribosomal subunit biogenesis GTPase RsgA</fullName>
        <ecNumber evidence="1">3.6.1.-</ecNumber>
    </recommendedName>
</protein>
<reference key="1">
    <citation type="journal article" date="2002" name="Proc. Natl. Acad. Sci. U.S.A.">
        <title>Complete genome sequence of Clostridium perfringens, an anaerobic flesh-eater.</title>
        <authorList>
            <person name="Shimizu T."/>
            <person name="Ohtani K."/>
            <person name="Hirakawa H."/>
            <person name="Ohshima K."/>
            <person name="Yamashita A."/>
            <person name="Shiba T."/>
            <person name="Ogasawara N."/>
            <person name="Hattori M."/>
            <person name="Kuhara S."/>
            <person name="Hayashi H."/>
        </authorList>
    </citation>
    <scope>NUCLEOTIDE SEQUENCE [LARGE SCALE GENOMIC DNA]</scope>
    <source>
        <strain>13 / Type A</strain>
    </source>
</reference>
<proteinExistence type="inferred from homology"/>
<organism>
    <name type="scientific">Clostridium perfringens (strain 13 / Type A)</name>
    <dbReference type="NCBI Taxonomy" id="195102"/>
    <lineage>
        <taxon>Bacteria</taxon>
        <taxon>Bacillati</taxon>
        <taxon>Bacillota</taxon>
        <taxon>Clostridia</taxon>
        <taxon>Eubacteriales</taxon>
        <taxon>Clostridiaceae</taxon>
        <taxon>Clostridium</taxon>
    </lineage>
</organism>
<feature type="chain" id="PRO_0000171473" description="Small ribosomal subunit biogenesis GTPase RsgA">
    <location>
        <begin position="1"/>
        <end position="287"/>
    </location>
</feature>
<feature type="domain" description="CP-type G" evidence="2">
    <location>
        <begin position="61"/>
        <end position="218"/>
    </location>
</feature>
<feature type="binding site" evidence="1">
    <location>
        <begin position="110"/>
        <end position="113"/>
    </location>
    <ligand>
        <name>GTP</name>
        <dbReference type="ChEBI" id="CHEBI:37565"/>
    </ligand>
</feature>
<feature type="binding site" evidence="1">
    <location>
        <begin position="161"/>
        <end position="169"/>
    </location>
    <ligand>
        <name>GTP</name>
        <dbReference type="ChEBI" id="CHEBI:37565"/>
    </ligand>
</feature>
<feature type="binding site" evidence="1">
    <location>
        <position position="242"/>
    </location>
    <ligand>
        <name>Zn(2+)</name>
        <dbReference type="ChEBI" id="CHEBI:29105"/>
    </ligand>
</feature>
<feature type="binding site" evidence="1">
    <location>
        <position position="247"/>
    </location>
    <ligand>
        <name>Zn(2+)</name>
        <dbReference type="ChEBI" id="CHEBI:29105"/>
    </ligand>
</feature>
<feature type="binding site" evidence="1">
    <location>
        <position position="249"/>
    </location>
    <ligand>
        <name>Zn(2+)</name>
        <dbReference type="ChEBI" id="CHEBI:29105"/>
    </ligand>
</feature>
<feature type="binding site" evidence="1">
    <location>
        <position position="255"/>
    </location>
    <ligand>
        <name>Zn(2+)</name>
        <dbReference type="ChEBI" id="CHEBI:29105"/>
    </ligand>
</feature>
<dbReference type="EC" id="3.6.1.-" evidence="1"/>
<dbReference type="EMBL" id="BA000016">
    <property type="protein sequence ID" value="BAB81443.1"/>
    <property type="molecule type" value="Genomic_DNA"/>
</dbReference>
<dbReference type="RefSeq" id="WP_003475268.1">
    <property type="nucleotide sequence ID" value="NC_003366.1"/>
</dbReference>
<dbReference type="SMR" id="Q8XJL9"/>
<dbReference type="STRING" id="195102.gene:10491001"/>
<dbReference type="GeneID" id="93001726"/>
<dbReference type="KEGG" id="cpe:CPE1737"/>
<dbReference type="HOGENOM" id="CLU_033617_2_1_9"/>
<dbReference type="Proteomes" id="UP000000818">
    <property type="component" value="Chromosome"/>
</dbReference>
<dbReference type="GO" id="GO:0005737">
    <property type="term" value="C:cytoplasm"/>
    <property type="evidence" value="ECO:0007669"/>
    <property type="project" value="UniProtKB-SubCell"/>
</dbReference>
<dbReference type="GO" id="GO:0005525">
    <property type="term" value="F:GTP binding"/>
    <property type="evidence" value="ECO:0007669"/>
    <property type="project" value="UniProtKB-UniRule"/>
</dbReference>
<dbReference type="GO" id="GO:0003924">
    <property type="term" value="F:GTPase activity"/>
    <property type="evidence" value="ECO:0007669"/>
    <property type="project" value="UniProtKB-UniRule"/>
</dbReference>
<dbReference type="GO" id="GO:0046872">
    <property type="term" value="F:metal ion binding"/>
    <property type="evidence" value="ECO:0007669"/>
    <property type="project" value="UniProtKB-KW"/>
</dbReference>
<dbReference type="GO" id="GO:0019843">
    <property type="term" value="F:rRNA binding"/>
    <property type="evidence" value="ECO:0007669"/>
    <property type="project" value="UniProtKB-KW"/>
</dbReference>
<dbReference type="GO" id="GO:0042274">
    <property type="term" value="P:ribosomal small subunit biogenesis"/>
    <property type="evidence" value="ECO:0007669"/>
    <property type="project" value="UniProtKB-UniRule"/>
</dbReference>
<dbReference type="CDD" id="cd04466">
    <property type="entry name" value="S1_YloQ_GTPase"/>
    <property type="match status" value="1"/>
</dbReference>
<dbReference type="CDD" id="cd01854">
    <property type="entry name" value="YjeQ_EngC"/>
    <property type="match status" value="1"/>
</dbReference>
<dbReference type="Gene3D" id="2.40.50.140">
    <property type="entry name" value="Nucleic acid-binding proteins"/>
    <property type="match status" value="1"/>
</dbReference>
<dbReference type="Gene3D" id="3.40.50.300">
    <property type="entry name" value="P-loop containing nucleotide triphosphate hydrolases"/>
    <property type="match status" value="1"/>
</dbReference>
<dbReference type="Gene3D" id="1.10.40.50">
    <property type="entry name" value="Probable gtpase engc, domain 3"/>
    <property type="match status" value="1"/>
</dbReference>
<dbReference type="HAMAP" id="MF_01820">
    <property type="entry name" value="GTPase_RsgA"/>
    <property type="match status" value="1"/>
</dbReference>
<dbReference type="InterPro" id="IPR030378">
    <property type="entry name" value="G_CP_dom"/>
</dbReference>
<dbReference type="InterPro" id="IPR012340">
    <property type="entry name" value="NA-bd_OB-fold"/>
</dbReference>
<dbReference type="InterPro" id="IPR027417">
    <property type="entry name" value="P-loop_NTPase"/>
</dbReference>
<dbReference type="InterPro" id="IPR004881">
    <property type="entry name" value="Ribosome_biogen_GTPase_RsgA"/>
</dbReference>
<dbReference type="InterPro" id="IPR010914">
    <property type="entry name" value="RsgA_GTPase_dom"/>
</dbReference>
<dbReference type="InterPro" id="IPR031944">
    <property type="entry name" value="RsgA_N"/>
</dbReference>
<dbReference type="NCBIfam" id="TIGR00157">
    <property type="entry name" value="ribosome small subunit-dependent GTPase A"/>
    <property type="match status" value="1"/>
</dbReference>
<dbReference type="PANTHER" id="PTHR32120">
    <property type="entry name" value="SMALL RIBOSOMAL SUBUNIT BIOGENESIS GTPASE RSGA"/>
    <property type="match status" value="1"/>
</dbReference>
<dbReference type="PANTHER" id="PTHR32120:SF11">
    <property type="entry name" value="SMALL RIBOSOMAL SUBUNIT BIOGENESIS GTPASE RSGA 1, MITOCHONDRIAL-RELATED"/>
    <property type="match status" value="1"/>
</dbReference>
<dbReference type="Pfam" id="PF03193">
    <property type="entry name" value="RsgA_GTPase"/>
    <property type="match status" value="1"/>
</dbReference>
<dbReference type="Pfam" id="PF16745">
    <property type="entry name" value="RsgA_N"/>
    <property type="match status" value="1"/>
</dbReference>
<dbReference type="SUPFAM" id="SSF50249">
    <property type="entry name" value="Nucleic acid-binding proteins"/>
    <property type="match status" value="1"/>
</dbReference>
<dbReference type="SUPFAM" id="SSF52540">
    <property type="entry name" value="P-loop containing nucleoside triphosphate hydrolases"/>
    <property type="match status" value="1"/>
</dbReference>
<dbReference type="PROSITE" id="PS50936">
    <property type="entry name" value="ENGC_GTPASE"/>
    <property type="match status" value="1"/>
</dbReference>
<dbReference type="PROSITE" id="PS51721">
    <property type="entry name" value="G_CP"/>
    <property type="match status" value="1"/>
</dbReference>
<keyword id="KW-0963">Cytoplasm</keyword>
<keyword id="KW-0342">GTP-binding</keyword>
<keyword id="KW-0378">Hydrolase</keyword>
<keyword id="KW-0479">Metal-binding</keyword>
<keyword id="KW-0547">Nucleotide-binding</keyword>
<keyword id="KW-1185">Reference proteome</keyword>
<keyword id="KW-0690">Ribosome biogenesis</keyword>
<keyword id="KW-0694">RNA-binding</keyword>
<keyword id="KW-0699">rRNA-binding</keyword>
<keyword id="KW-0862">Zinc</keyword>
<evidence type="ECO:0000255" key="1">
    <source>
        <dbReference type="HAMAP-Rule" id="MF_01820"/>
    </source>
</evidence>
<evidence type="ECO:0000255" key="2">
    <source>
        <dbReference type="PROSITE-ProRule" id="PRU01058"/>
    </source>
</evidence>
<gene>
    <name evidence="1" type="primary">rsgA</name>
    <name type="ordered locus">CPE1737</name>
</gene>